<evidence type="ECO:0000250" key="1">
    <source>
        <dbReference type="UniProtKB" id="P20226"/>
    </source>
</evidence>
<evidence type="ECO:0000250" key="2">
    <source>
        <dbReference type="UniProtKB" id="P28147"/>
    </source>
</evidence>
<evidence type="ECO:0000255" key="3"/>
<evidence type="ECO:0000269" key="4">
    <source>
    </source>
</evidence>
<evidence type="ECO:0000269" key="5">
    <source>
    </source>
</evidence>
<evidence type="ECO:0000269" key="6">
    <source>
    </source>
</evidence>
<evidence type="ECO:0000269" key="7">
    <source>
    </source>
</evidence>
<evidence type="ECO:0000269" key="8">
    <source>
    </source>
</evidence>
<evidence type="ECO:0000269" key="9">
    <source>
    </source>
</evidence>
<evidence type="ECO:0000303" key="10">
    <source>
    </source>
</evidence>
<evidence type="ECO:0000303" key="11">
    <source>
    </source>
</evidence>
<evidence type="ECO:0000303" key="12">
    <source ref="2"/>
</evidence>
<evidence type="ECO:0000305" key="13"/>
<evidence type="ECO:0000312" key="14">
    <source>
        <dbReference type="Araport" id="AT1G55520"/>
    </source>
</evidence>
<evidence type="ECO:0000312" key="15">
    <source>
        <dbReference type="EMBL" id="AAD10645.1"/>
    </source>
</evidence>
<feature type="chain" id="PRO_0000153977" description="TATA-box-binding protein 2">
    <location>
        <begin position="1"/>
        <end position="200"/>
    </location>
</feature>
<feature type="repeat" description="1" evidence="3">
    <location>
        <begin position="25"/>
        <end position="101"/>
    </location>
</feature>
<feature type="repeat" description="2" evidence="3">
    <location>
        <begin position="115"/>
        <end position="192"/>
    </location>
</feature>
<feature type="mutagenesis site" description="Unable to bind to TFIIB1." evidence="4">
    <original>E</original>
    <variation>R</variation>
    <location>
        <position position="144"/>
    </location>
</feature>
<feature type="mutagenesis site" description="Unable to bind to TFIIB1." evidence="4">
    <original>E</original>
    <variation>R</variation>
    <location>
        <position position="146"/>
    </location>
</feature>
<feature type="mutagenesis site" description="No effect on the binding to TFIIB1." evidence="4">
    <original>K</original>
    <variation>E</variation>
    <location>
        <position position="197"/>
    </location>
</feature>
<gene>
    <name evidence="12" type="primary">TBP2</name>
    <name evidence="14" type="ordered locus">At1g55520</name>
    <name evidence="15" type="ORF">T5A14.8</name>
</gene>
<comment type="function">
    <text evidence="1 4 6">General transcription factor (GTF) that functions at the core of the DNA-binding multiprotein factor TFIID. Binding of TFIID to the TATA box is the initial transcriptional step of the pre-initiation complex (PIC), playing a role in the activation of eukaryotic genes transcribed by RNA polymerase II (By similarity). Interacts with TFIIB1 and is required for activated transcription and possibly basal transcription (PubMed:10634912). May act as GTF of RNA polymerase I-dependent transcription and rRNA synthesis. Forms a ternary complex with PBRP1 and the rDNA promoter region (PubMed:18668124).</text>
</comment>
<comment type="subunit">
    <text evidence="4 5 7 8 9">Belongs to the TFIID complex together with the TBP-associated factors (TAFs). Binds DNA as monomer. Interacts with TAF1 (via N-terminus) (PubMed:17340043). Interacts with TFIIB1 (PubMed:10634912). Interacts with PTF2 (PubMed:23713077). Interacts with HAT5/ATHB-1 and ATHB-7 (PubMed:24531799). Component of a nuclear protein complex containing at least TATA binding proteins (TBPs, e.g. TBP1 and TBP2) and ATX1 (PubMed:21266657).</text>
</comment>
<comment type="interaction">
    <interactant intactId="EBI-1247465">
        <id>P28148</id>
    </interactant>
    <interactant intactId="EBI-1544927">
        <id>P41151</id>
        <label>HSFA1A</label>
    </interactant>
    <organismsDiffer>false</organismsDiffer>
    <experiments>2</experiments>
</comment>
<comment type="subcellular location">
    <subcellularLocation>
        <location evidence="2">Nucleus</location>
    </subcellularLocation>
</comment>
<comment type="similarity">
    <text evidence="13">Belongs to the TBP family.</text>
</comment>
<organism>
    <name type="scientific">Arabidopsis thaliana</name>
    <name type="common">Mouse-ear cress</name>
    <dbReference type="NCBI Taxonomy" id="3702"/>
    <lineage>
        <taxon>Eukaryota</taxon>
        <taxon>Viridiplantae</taxon>
        <taxon>Streptophyta</taxon>
        <taxon>Embryophyta</taxon>
        <taxon>Tracheophyta</taxon>
        <taxon>Spermatophyta</taxon>
        <taxon>Magnoliopsida</taxon>
        <taxon>eudicotyledons</taxon>
        <taxon>Gunneridae</taxon>
        <taxon>Pentapetalae</taxon>
        <taxon>rosids</taxon>
        <taxon>malvids</taxon>
        <taxon>Brassicales</taxon>
        <taxon>Brassicaceae</taxon>
        <taxon>Camelineae</taxon>
        <taxon>Arabidopsis</taxon>
    </lineage>
</organism>
<protein>
    <recommendedName>
        <fullName evidence="12">TATA-box-binding protein 2</fullName>
    </recommendedName>
    <alternativeName>
        <fullName evidence="12">TATA sequence-binding protein 2</fullName>
        <shortName evidence="10">AtTBP2</shortName>
        <shortName evidence="12">TBP-2</shortName>
    </alternativeName>
    <alternativeName>
        <fullName evidence="12">TATA-binding factor 2</fullName>
    </alternativeName>
    <alternativeName>
        <fullName evidence="12">TATA-box factor 2</fullName>
    </alternativeName>
    <alternativeName>
        <fullName evidence="11">Transcription initiation factor TFIID TBP-2 subunit</fullName>
    </alternativeName>
</protein>
<proteinExistence type="evidence at protein level"/>
<dbReference type="EMBL" id="X54995">
    <property type="protein sequence ID" value="CAA38742.1"/>
    <property type="molecule type" value="mRNA"/>
</dbReference>
<dbReference type="EMBL" id="AY463626">
    <property type="protein sequence ID" value="AAR28028.1"/>
    <property type="molecule type" value="mRNA"/>
</dbReference>
<dbReference type="EMBL" id="AC005223">
    <property type="protein sequence ID" value="AAD10645.1"/>
    <property type="molecule type" value="Genomic_DNA"/>
</dbReference>
<dbReference type="EMBL" id="CP002684">
    <property type="protein sequence ID" value="AEE33257.1"/>
    <property type="molecule type" value="Genomic_DNA"/>
</dbReference>
<dbReference type="EMBL" id="CP002684">
    <property type="protein sequence ID" value="AEE33258.1"/>
    <property type="molecule type" value="Genomic_DNA"/>
</dbReference>
<dbReference type="EMBL" id="CP002684">
    <property type="protein sequence ID" value="ANM58687.1"/>
    <property type="molecule type" value="Genomic_DNA"/>
</dbReference>
<dbReference type="EMBL" id="BT006488">
    <property type="protein sequence ID" value="AAP21296.1"/>
    <property type="molecule type" value="mRNA"/>
</dbReference>
<dbReference type="EMBL" id="AK227470">
    <property type="protein sequence ID" value="BAE99472.1"/>
    <property type="molecule type" value="mRNA"/>
</dbReference>
<dbReference type="EMBL" id="AB493506">
    <property type="protein sequence ID" value="BAH30344.1"/>
    <property type="molecule type" value="mRNA"/>
</dbReference>
<dbReference type="PIR" id="S10945">
    <property type="entry name" value="S10945"/>
</dbReference>
<dbReference type="RefSeq" id="NP_001321103.1">
    <property type="nucleotide sequence ID" value="NM_001333717.1"/>
</dbReference>
<dbReference type="RefSeq" id="NP_175948.1">
    <property type="nucleotide sequence ID" value="NM_104427.4"/>
</dbReference>
<dbReference type="RefSeq" id="NP_849812.1">
    <property type="nucleotide sequence ID" value="NM_179481.2"/>
</dbReference>
<dbReference type="SMR" id="P28148"/>
<dbReference type="BioGRID" id="27224">
    <property type="interactions" value="14"/>
</dbReference>
<dbReference type="FunCoup" id="P28148">
    <property type="interactions" value="4492"/>
</dbReference>
<dbReference type="IntAct" id="P28148">
    <property type="interactions" value="11"/>
</dbReference>
<dbReference type="STRING" id="3702.P28148"/>
<dbReference type="PaxDb" id="3702-AT1G55520.2"/>
<dbReference type="ProteomicsDB" id="234158"/>
<dbReference type="EnsemblPlants" id="AT1G55520.1">
    <property type="protein sequence ID" value="AT1G55520.1"/>
    <property type="gene ID" value="AT1G55520"/>
</dbReference>
<dbReference type="EnsemblPlants" id="AT1G55520.2">
    <property type="protein sequence ID" value="AT1G55520.2"/>
    <property type="gene ID" value="AT1G55520"/>
</dbReference>
<dbReference type="EnsemblPlants" id="AT1G55520.4">
    <property type="protein sequence ID" value="AT1G55520.4"/>
    <property type="gene ID" value="AT1G55520"/>
</dbReference>
<dbReference type="GeneID" id="841999"/>
<dbReference type="Gramene" id="AT1G55520.1">
    <property type="protein sequence ID" value="AT1G55520.1"/>
    <property type="gene ID" value="AT1G55520"/>
</dbReference>
<dbReference type="Gramene" id="AT1G55520.2">
    <property type="protein sequence ID" value="AT1G55520.2"/>
    <property type="gene ID" value="AT1G55520"/>
</dbReference>
<dbReference type="Gramene" id="AT1G55520.4">
    <property type="protein sequence ID" value="AT1G55520.4"/>
    <property type="gene ID" value="AT1G55520"/>
</dbReference>
<dbReference type="KEGG" id="ath:AT1G55520"/>
<dbReference type="Araport" id="AT1G55520"/>
<dbReference type="TAIR" id="AT1G55520">
    <property type="gene designation" value="TBP2"/>
</dbReference>
<dbReference type="eggNOG" id="KOG3302">
    <property type="taxonomic scope" value="Eukaryota"/>
</dbReference>
<dbReference type="HOGENOM" id="CLU_060161_4_2_1"/>
<dbReference type="InParanoid" id="P28148"/>
<dbReference type="OMA" id="NCEYEPE"/>
<dbReference type="OrthoDB" id="2127950at2759"/>
<dbReference type="PhylomeDB" id="P28148"/>
<dbReference type="PRO" id="PR:P28148"/>
<dbReference type="Proteomes" id="UP000006548">
    <property type="component" value="Chromosome 1"/>
</dbReference>
<dbReference type="ExpressionAtlas" id="P28148">
    <property type="expression patterns" value="baseline and differential"/>
</dbReference>
<dbReference type="GO" id="GO:0005634">
    <property type="term" value="C:nucleus"/>
    <property type="evidence" value="ECO:0007669"/>
    <property type="project" value="UniProtKB-SubCell"/>
</dbReference>
<dbReference type="GO" id="GO:0003677">
    <property type="term" value="F:DNA binding"/>
    <property type="evidence" value="ECO:0000314"/>
    <property type="project" value="UniProtKB"/>
</dbReference>
<dbReference type="GO" id="GO:0017025">
    <property type="term" value="F:TBP-class protein binding"/>
    <property type="evidence" value="ECO:0000250"/>
    <property type="project" value="TAIR"/>
</dbReference>
<dbReference type="GO" id="GO:0006352">
    <property type="term" value="P:DNA-templated transcription initiation"/>
    <property type="evidence" value="ECO:0000314"/>
    <property type="project" value="TAIR"/>
</dbReference>
<dbReference type="CDD" id="cd04516">
    <property type="entry name" value="TBP_eukaryotes"/>
    <property type="match status" value="1"/>
</dbReference>
<dbReference type="FunFam" id="3.30.310.10:FF:000001">
    <property type="entry name" value="TATA-box-binding protein 2"/>
    <property type="match status" value="1"/>
</dbReference>
<dbReference type="FunFam" id="3.30.310.10:FF:000002">
    <property type="entry name" value="TATA-box-binding protein 2"/>
    <property type="match status" value="1"/>
</dbReference>
<dbReference type="Gene3D" id="3.30.310.10">
    <property type="entry name" value="TATA-Binding Protein"/>
    <property type="match status" value="2"/>
</dbReference>
<dbReference type="HAMAP" id="MF_00408">
    <property type="entry name" value="TATA_bind_prot_arch"/>
    <property type="match status" value="1"/>
</dbReference>
<dbReference type="InterPro" id="IPR000814">
    <property type="entry name" value="TBP"/>
</dbReference>
<dbReference type="InterPro" id="IPR030491">
    <property type="entry name" value="TBP_CS"/>
</dbReference>
<dbReference type="InterPro" id="IPR012295">
    <property type="entry name" value="TBP_dom_sf"/>
</dbReference>
<dbReference type="InterPro" id="IPR033710">
    <property type="entry name" value="TBP_eukaryotic"/>
</dbReference>
<dbReference type="PANTHER" id="PTHR10126">
    <property type="entry name" value="TATA-BOX BINDING PROTEIN"/>
    <property type="match status" value="1"/>
</dbReference>
<dbReference type="Pfam" id="PF00352">
    <property type="entry name" value="TBP"/>
    <property type="match status" value="2"/>
</dbReference>
<dbReference type="PRINTS" id="PR00686">
    <property type="entry name" value="TIFACTORIID"/>
</dbReference>
<dbReference type="SUPFAM" id="SSF55945">
    <property type="entry name" value="TATA-box binding protein-like"/>
    <property type="match status" value="2"/>
</dbReference>
<dbReference type="PROSITE" id="PS00351">
    <property type="entry name" value="TFIID"/>
    <property type="match status" value="2"/>
</dbReference>
<sequence length="200" mass="22396">MADQGTEGSQPVDLTKHPSGIVPTLQNIVSTVNLDCKLDLKAIALQARNAEYNPKRFAAVIMRIREPKTTALIFASGKMVCTGAKSEHLSKLAARKYARIVQKLGFPAKFKDFKIQNIVGSCDVKFPIRLEGLAYSHSAFSSYEPELFPGLIYRMKLPKIVLLIFVSGKIVITGAKMREETYTAFENIYPVLREFRKVQQ</sequence>
<keyword id="KW-0010">Activator</keyword>
<keyword id="KW-0238">DNA-binding</keyword>
<keyword id="KW-0539">Nucleus</keyword>
<keyword id="KW-1185">Reference proteome</keyword>
<keyword id="KW-0677">Repeat</keyword>
<keyword id="KW-0804">Transcription</keyword>
<keyword id="KW-0805">Transcription regulation</keyword>
<accession>P28148</accession>
<accession>Q53YT7</accession>
<name>TBP2_ARATH</name>
<reference key="1">
    <citation type="journal article" date="1990" name="Nature">
        <title>Arabidopsis thaliana contains two genes for TFIID.</title>
        <authorList>
            <person name="Gasch A."/>
            <person name="Hoffmann A."/>
            <person name="Horikoshi M."/>
            <person name="Roeder R.G."/>
            <person name="Chua N.-H."/>
        </authorList>
    </citation>
    <scope>NUCLEOTIDE SEQUENCE [MRNA]</scope>
</reference>
<reference key="2">
    <citation type="submission" date="2003-11" db="EMBL/GenBank/DDBJ databases">
        <title>Binary protein-protein interactions of the Arabidopsis thaliana general transcription factor IId.</title>
        <authorList>
            <person name="Lawit S.J."/>
            <person name="Gurley W.B."/>
        </authorList>
    </citation>
    <scope>NUCLEOTIDE SEQUENCE [MRNA]</scope>
    <source>
        <strain>cv. Columbia</strain>
    </source>
</reference>
<reference key="3">
    <citation type="journal article" date="2000" name="Nature">
        <title>Sequence and analysis of chromosome 1 of the plant Arabidopsis thaliana.</title>
        <authorList>
            <person name="Theologis A."/>
            <person name="Ecker J.R."/>
            <person name="Palm C.J."/>
            <person name="Federspiel N.A."/>
            <person name="Kaul S."/>
            <person name="White O."/>
            <person name="Alonso J."/>
            <person name="Altafi H."/>
            <person name="Araujo R."/>
            <person name="Bowman C.L."/>
            <person name="Brooks S.Y."/>
            <person name="Buehler E."/>
            <person name="Chan A."/>
            <person name="Chao Q."/>
            <person name="Chen H."/>
            <person name="Cheuk R.F."/>
            <person name="Chin C.W."/>
            <person name="Chung M.K."/>
            <person name="Conn L."/>
            <person name="Conway A.B."/>
            <person name="Conway A.R."/>
            <person name="Creasy T.H."/>
            <person name="Dewar K."/>
            <person name="Dunn P."/>
            <person name="Etgu P."/>
            <person name="Feldblyum T.V."/>
            <person name="Feng J.-D."/>
            <person name="Fong B."/>
            <person name="Fujii C.Y."/>
            <person name="Gill J.E."/>
            <person name="Goldsmith A.D."/>
            <person name="Haas B."/>
            <person name="Hansen N.F."/>
            <person name="Hughes B."/>
            <person name="Huizar L."/>
            <person name="Hunter J.L."/>
            <person name="Jenkins J."/>
            <person name="Johnson-Hopson C."/>
            <person name="Khan S."/>
            <person name="Khaykin E."/>
            <person name="Kim C.J."/>
            <person name="Koo H.L."/>
            <person name="Kremenetskaia I."/>
            <person name="Kurtz D.B."/>
            <person name="Kwan A."/>
            <person name="Lam B."/>
            <person name="Langin-Hooper S."/>
            <person name="Lee A."/>
            <person name="Lee J.M."/>
            <person name="Lenz C.A."/>
            <person name="Li J.H."/>
            <person name="Li Y.-P."/>
            <person name="Lin X."/>
            <person name="Liu S.X."/>
            <person name="Liu Z.A."/>
            <person name="Luros J.S."/>
            <person name="Maiti R."/>
            <person name="Marziali A."/>
            <person name="Militscher J."/>
            <person name="Miranda M."/>
            <person name="Nguyen M."/>
            <person name="Nierman W.C."/>
            <person name="Osborne B.I."/>
            <person name="Pai G."/>
            <person name="Peterson J."/>
            <person name="Pham P.K."/>
            <person name="Rizzo M."/>
            <person name="Rooney T."/>
            <person name="Rowley D."/>
            <person name="Sakano H."/>
            <person name="Salzberg S.L."/>
            <person name="Schwartz J.R."/>
            <person name="Shinn P."/>
            <person name="Southwick A.M."/>
            <person name="Sun H."/>
            <person name="Tallon L.J."/>
            <person name="Tambunga G."/>
            <person name="Toriumi M.J."/>
            <person name="Town C.D."/>
            <person name="Utterback T."/>
            <person name="Van Aken S."/>
            <person name="Vaysberg M."/>
            <person name="Vysotskaia V.S."/>
            <person name="Walker M."/>
            <person name="Wu D."/>
            <person name="Yu G."/>
            <person name="Fraser C.M."/>
            <person name="Venter J.C."/>
            <person name="Davis R.W."/>
        </authorList>
    </citation>
    <scope>NUCLEOTIDE SEQUENCE [LARGE SCALE GENOMIC DNA]</scope>
    <source>
        <strain>cv. Columbia</strain>
    </source>
</reference>
<reference key="4">
    <citation type="journal article" date="2017" name="Plant J.">
        <title>Araport11: a complete reannotation of the Arabidopsis thaliana reference genome.</title>
        <authorList>
            <person name="Cheng C.Y."/>
            <person name="Krishnakumar V."/>
            <person name="Chan A.P."/>
            <person name="Thibaud-Nissen F."/>
            <person name="Schobel S."/>
            <person name="Town C.D."/>
        </authorList>
    </citation>
    <scope>GENOME REANNOTATION</scope>
    <source>
        <strain>cv. Columbia</strain>
    </source>
</reference>
<reference key="5">
    <citation type="journal article" date="2003" name="Science">
        <title>Empirical analysis of transcriptional activity in the Arabidopsis genome.</title>
        <authorList>
            <person name="Yamada K."/>
            <person name="Lim J."/>
            <person name="Dale J.M."/>
            <person name="Chen H."/>
            <person name="Shinn P."/>
            <person name="Palm C.J."/>
            <person name="Southwick A.M."/>
            <person name="Wu H.C."/>
            <person name="Kim C.J."/>
            <person name="Nguyen M."/>
            <person name="Pham P.K."/>
            <person name="Cheuk R.F."/>
            <person name="Karlin-Newmann G."/>
            <person name="Liu S.X."/>
            <person name="Lam B."/>
            <person name="Sakano H."/>
            <person name="Wu T."/>
            <person name="Yu G."/>
            <person name="Miranda M."/>
            <person name="Quach H.L."/>
            <person name="Tripp M."/>
            <person name="Chang C.H."/>
            <person name="Lee J.M."/>
            <person name="Toriumi M.J."/>
            <person name="Chan M.M."/>
            <person name="Tang C.C."/>
            <person name="Onodera C.S."/>
            <person name="Deng J.M."/>
            <person name="Akiyama K."/>
            <person name="Ansari Y."/>
            <person name="Arakawa T."/>
            <person name="Banh J."/>
            <person name="Banno F."/>
            <person name="Bowser L."/>
            <person name="Brooks S.Y."/>
            <person name="Carninci P."/>
            <person name="Chao Q."/>
            <person name="Choy N."/>
            <person name="Enju A."/>
            <person name="Goldsmith A.D."/>
            <person name="Gurjal M."/>
            <person name="Hansen N.F."/>
            <person name="Hayashizaki Y."/>
            <person name="Johnson-Hopson C."/>
            <person name="Hsuan V.W."/>
            <person name="Iida K."/>
            <person name="Karnes M."/>
            <person name="Khan S."/>
            <person name="Koesema E."/>
            <person name="Ishida J."/>
            <person name="Jiang P.X."/>
            <person name="Jones T."/>
            <person name="Kawai J."/>
            <person name="Kamiya A."/>
            <person name="Meyers C."/>
            <person name="Nakajima M."/>
            <person name="Narusaka M."/>
            <person name="Seki M."/>
            <person name="Sakurai T."/>
            <person name="Satou M."/>
            <person name="Tamse R."/>
            <person name="Vaysberg M."/>
            <person name="Wallender E.K."/>
            <person name="Wong C."/>
            <person name="Yamamura Y."/>
            <person name="Yuan S."/>
            <person name="Shinozaki K."/>
            <person name="Davis R.W."/>
            <person name="Theologis A."/>
            <person name="Ecker J.R."/>
        </authorList>
    </citation>
    <scope>NUCLEOTIDE SEQUENCE [LARGE SCALE MRNA]</scope>
    <source>
        <strain>cv. Columbia</strain>
    </source>
</reference>
<reference key="6">
    <citation type="submission" date="2006-07" db="EMBL/GenBank/DDBJ databases">
        <title>Large-scale analysis of RIKEN Arabidopsis full-length (RAFL) cDNAs.</title>
        <authorList>
            <person name="Totoki Y."/>
            <person name="Seki M."/>
            <person name="Ishida J."/>
            <person name="Nakajima M."/>
            <person name="Enju A."/>
            <person name="Kamiya A."/>
            <person name="Narusaka M."/>
            <person name="Shin-i T."/>
            <person name="Nakagawa M."/>
            <person name="Sakamoto N."/>
            <person name="Oishi K."/>
            <person name="Kohara Y."/>
            <person name="Kobayashi M."/>
            <person name="Toyoda A."/>
            <person name="Sakaki Y."/>
            <person name="Sakurai T."/>
            <person name="Iida K."/>
            <person name="Akiyama K."/>
            <person name="Satou M."/>
            <person name="Toyoda T."/>
            <person name="Konagaya A."/>
            <person name="Carninci P."/>
            <person name="Kawai J."/>
            <person name="Hayashizaki Y."/>
            <person name="Shinozaki K."/>
        </authorList>
    </citation>
    <scope>NUCLEOTIDE SEQUENCE [LARGE SCALE MRNA]</scope>
    <source>
        <strain>cv. Columbia</strain>
    </source>
</reference>
<reference key="7">
    <citation type="submission" date="2009-03" db="EMBL/GenBank/DDBJ databases">
        <title>ORF cloning and analysis of Arabidopsis transcription factor genes.</title>
        <authorList>
            <person name="Fujita M."/>
            <person name="Mizukado S."/>
            <person name="Seki M."/>
            <person name="Shinozaki K."/>
            <person name="Mitsuda N."/>
            <person name="Takiguchi Y."/>
            <person name="Takagi M."/>
        </authorList>
    </citation>
    <scope>NUCLEOTIDE SEQUENCE [LARGE SCALE MRNA]</scope>
</reference>
<reference key="8">
    <citation type="journal article" date="2000" name="Plant Cell">
        <title>Role of the TATA binding protein-transcription factor IIB interaction in supporting basal and activated transcription in plant cells.</title>
        <authorList>
            <person name="Pan S."/>
            <person name="Czarnecka-Verner E."/>
            <person name="Gurley W.B."/>
        </authorList>
    </citation>
    <scope>FUNCTION</scope>
    <scope>INTERACTION WITH TFIIB1</scope>
    <scope>MUTAGENESIS OF GLU-144; GLU-146 AND LYS-197</scope>
</reference>
<reference key="9">
    <citation type="journal article" date="2007" name="Plant Mol. Biol.">
        <title>Yeast two-hybrid map of Arabidopsis TFIID.</title>
        <authorList>
            <person name="Lawit S.J."/>
            <person name="O'Grady K."/>
            <person name="Gurley W.B."/>
            <person name="Czarnecka-Verner E."/>
        </authorList>
    </citation>
    <scope>INTERACTION WITH TAF1</scope>
</reference>
<reference key="10">
    <citation type="journal article" date="2008" name="EMBO J.">
        <title>The plant-specific TFIIB-related protein, pBrp, is a general transcription factor for RNA polymerase I.</title>
        <authorList>
            <person name="Imamura S."/>
            <person name="Hanaoka M."/>
            <person name="Tanaka K."/>
        </authorList>
    </citation>
    <scope>FUNCTION</scope>
</reference>
<reference key="11">
    <citation type="journal article" date="2011" name="Plant Cell">
        <title>Two distinct roles of ARABIDOPSIS HOMOLOG OF TRITHORAX1 (ATX1) at promoters and within transcribed regions of ATX1-regulated genes.</title>
        <authorList>
            <person name="Ding Y."/>
            <person name="Avramova Z."/>
            <person name="Fromm M."/>
        </authorList>
    </citation>
    <scope>SUBUNIT</scope>
    <source>
        <strain>cv. Wassilewskija</strain>
    </source>
</reference>
<reference key="12">
    <citation type="journal article" date="2013" name="Mol. Plant">
        <title>Pollen-expressed transcription factor 2 encodes a novel plant-specific TFIIB-related protein that is required for pollen germination and embryogenesis in Arabidopsis.</title>
        <authorList>
            <person name="Niu Q.K."/>
            <person name="Liang Y."/>
            <person name="Zhou J.J."/>
            <person name="Dou X.Y."/>
            <person name="Gao S.C."/>
            <person name="Chen L.Q."/>
            <person name="Zhang X.Q."/>
            <person name="Ye D."/>
        </authorList>
    </citation>
    <scope>INTERACTION WITH PTF2</scope>
</reference>
<reference key="13">
    <citation type="journal article" date="2014" name="Plant Cell Rep.">
        <title>Plant homeodomain-leucine zipper I transcription factors exhibit different functional AHA motifs that selectively interact with TBP or/and TFIIB.</title>
        <authorList>
            <person name="Capella M."/>
            <person name="Re D.A."/>
            <person name="Arce A.L."/>
            <person name="Chan R.L."/>
        </authorList>
    </citation>
    <scope>INTERACTION WITH HAT5/ATHB-1 AND ATHB-7</scope>
</reference>